<accession>Q4R813</accession>
<evidence type="ECO:0000250" key="1"/>
<evidence type="ECO:0000255" key="2">
    <source>
        <dbReference type="PROSITE-ProRule" id="PRU00176"/>
    </source>
</evidence>
<evidence type="ECO:0000256" key="3">
    <source>
        <dbReference type="SAM" id="MobiDB-lite"/>
    </source>
</evidence>
<protein>
    <recommendedName>
        <fullName>RNA-binding motif protein, X-linked-like-2</fullName>
    </recommendedName>
    <alternativeName>
        <fullName>Testis-specific heterogeneous nuclear ribonucleoprotein G-T</fullName>
        <shortName>hnRNP G-T</shortName>
    </alternativeName>
</protein>
<dbReference type="EMBL" id="AB168648">
    <property type="protein sequence ID" value="BAE00759.1"/>
    <property type="molecule type" value="mRNA"/>
</dbReference>
<dbReference type="RefSeq" id="NP_001270408.1">
    <property type="nucleotide sequence ID" value="NM_001283479.1"/>
</dbReference>
<dbReference type="SMR" id="Q4R813"/>
<dbReference type="STRING" id="9541.ENSMFAP00000037254"/>
<dbReference type="eggNOG" id="ENOG502SBHG">
    <property type="taxonomic scope" value="Eukaryota"/>
</dbReference>
<dbReference type="Proteomes" id="UP000233100">
    <property type="component" value="Unplaced"/>
</dbReference>
<dbReference type="GO" id="GO:0005634">
    <property type="term" value="C:nucleus"/>
    <property type="evidence" value="ECO:0007669"/>
    <property type="project" value="UniProtKB-SubCell"/>
</dbReference>
<dbReference type="GO" id="GO:1990904">
    <property type="term" value="C:ribonucleoprotein complex"/>
    <property type="evidence" value="ECO:0007669"/>
    <property type="project" value="UniProtKB-KW"/>
</dbReference>
<dbReference type="GO" id="GO:0003723">
    <property type="term" value="F:RNA binding"/>
    <property type="evidence" value="ECO:0007669"/>
    <property type="project" value="UniProtKB-KW"/>
</dbReference>
<dbReference type="CDD" id="cd12382">
    <property type="entry name" value="RRM_RBMX_like"/>
    <property type="match status" value="1"/>
</dbReference>
<dbReference type="FunFam" id="3.30.70.330:FF:000119">
    <property type="entry name" value="RNA-binding motif protein, X chromosome"/>
    <property type="match status" value="1"/>
</dbReference>
<dbReference type="Gene3D" id="3.30.70.330">
    <property type="match status" value="1"/>
</dbReference>
<dbReference type="InterPro" id="IPR012677">
    <property type="entry name" value="Nucleotide-bd_a/b_plait_sf"/>
</dbReference>
<dbReference type="InterPro" id="IPR035979">
    <property type="entry name" value="RBD_domain_sf"/>
</dbReference>
<dbReference type="InterPro" id="IPR050441">
    <property type="entry name" value="RBM"/>
</dbReference>
<dbReference type="InterPro" id="IPR012604">
    <property type="entry name" value="RBM1CTR"/>
</dbReference>
<dbReference type="InterPro" id="IPR000504">
    <property type="entry name" value="RRM_dom"/>
</dbReference>
<dbReference type="PANTHER" id="PTHR48034">
    <property type="entry name" value="TRANSFORMER-2 SEX-DETERMINING PROTEIN-RELATED"/>
    <property type="match status" value="1"/>
</dbReference>
<dbReference type="Pfam" id="PF08081">
    <property type="entry name" value="RBM1CTR"/>
    <property type="match status" value="1"/>
</dbReference>
<dbReference type="Pfam" id="PF00076">
    <property type="entry name" value="RRM_1"/>
    <property type="match status" value="1"/>
</dbReference>
<dbReference type="SMART" id="SM00360">
    <property type="entry name" value="RRM"/>
    <property type="match status" value="1"/>
</dbReference>
<dbReference type="SUPFAM" id="SSF54928">
    <property type="entry name" value="RNA-binding domain, RBD"/>
    <property type="match status" value="1"/>
</dbReference>
<dbReference type="PROSITE" id="PS50102">
    <property type="entry name" value="RRM"/>
    <property type="match status" value="1"/>
</dbReference>
<feature type="chain" id="PRO_0000281738" description="RNA-binding motif protein, X-linked-like-2">
    <location>
        <begin position="1"/>
        <end position="394"/>
    </location>
</feature>
<feature type="domain" description="RRM" evidence="2">
    <location>
        <begin position="8"/>
        <end position="86"/>
    </location>
</feature>
<feature type="region of interest" description="Disordered" evidence="3">
    <location>
        <begin position="67"/>
        <end position="394"/>
    </location>
</feature>
<feature type="compositionally biased region" description="Basic and acidic residues" evidence="3">
    <location>
        <begin position="67"/>
        <end position="78"/>
    </location>
</feature>
<feature type="compositionally biased region" description="Pro residues" evidence="3">
    <location>
        <begin position="150"/>
        <end position="165"/>
    </location>
</feature>
<feature type="compositionally biased region" description="Basic and acidic residues" evidence="3">
    <location>
        <begin position="196"/>
        <end position="231"/>
    </location>
</feature>
<feature type="compositionally biased region" description="Basic and acidic residues" evidence="3">
    <location>
        <begin position="239"/>
        <end position="285"/>
    </location>
</feature>
<feature type="compositionally biased region" description="Low complexity" evidence="3">
    <location>
        <begin position="321"/>
        <end position="333"/>
    </location>
</feature>
<feature type="compositionally biased region" description="Basic and acidic residues" evidence="3">
    <location>
        <begin position="334"/>
        <end position="350"/>
    </location>
</feature>
<feature type="compositionally biased region" description="Basic and acidic residues" evidence="3">
    <location>
        <begin position="383"/>
        <end position="394"/>
    </location>
</feature>
<keyword id="KW-0539">Nucleus</keyword>
<keyword id="KW-1185">Reference proteome</keyword>
<keyword id="KW-0687">Ribonucleoprotein</keyword>
<keyword id="KW-0694">RNA-binding</keyword>
<organism>
    <name type="scientific">Macaca fascicularis</name>
    <name type="common">Crab-eating macaque</name>
    <name type="synonym">Cynomolgus monkey</name>
    <dbReference type="NCBI Taxonomy" id="9541"/>
    <lineage>
        <taxon>Eukaryota</taxon>
        <taxon>Metazoa</taxon>
        <taxon>Chordata</taxon>
        <taxon>Craniata</taxon>
        <taxon>Vertebrata</taxon>
        <taxon>Euteleostomi</taxon>
        <taxon>Mammalia</taxon>
        <taxon>Eutheria</taxon>
        <taxon>Euarchontoglires</taxon>
        <taxon>Primates</taxon>
        <taxon>Haplorrhini</taxon>
        <taxon>Catarrhini</taxon>
        <taxon>Cercopithecidae</taxon>
        <taxon>Cercopithecinae</taxon>
        <taxon>Macaca</taxon>
    </lineage>
</organism>
<gene>
    <name type="primary">RBMXL2</name>
    <name type="synonym">HNRNPGT</name>
    <name type="ORF">QtsA-13770</name>
</gene>
<name>RMXL2_MACFA</name>
<comment type="subcellular location">
    <subcellularLocation>
        <location evidence="1">Nucleus</location>
    </subcellularLocation>
</comment>
<reference key="1">
    <citation type="submission" date="2006-10" db="EMBL/GenBank/DDBJ databases">
        <title>DNA sequences of macaque genes expressed in brain or testis and its evolutionary implications.</title>
        <authorList>
            <consortium name="International consortium for macaque cDNA sequencing and analysis"/>
        </authorList>
    </citation>
    <scope>NUCLEOTIDE SEQUENCE [LARGE SCALE MRNA]</scope>
    <source>
        <tissue>Testis</tissue>
    </source>
</reference>
<proteinExistence type="evidence at transcript level"/>
<sequence length="394" mass="42966">MVEADRPGKLFIGGLNLETDEKALEAEFGKYGRIVEVLLMKDRETNKSRGFAFVTFESPANAKAAARDMNGKSLDGKAIKVAQATKPAFESSRRGPPPPRSRGRPRFLRGTRGGGGGPRRSPSRGGPDDDGGYAGDFDLRPSRAPMPMKRGPPPPPRRAGPPPKRAAPSGPARSSGGGMRGRALAVRGRDGYSGPPRREPPPPRRDPYLGPRDEGYSSRDGYSSRDYREPRGFAPSPREYTHREYGHSSVRDDCPLRGYGDRDGYGCRDRDYGDHPSRGSYREPFESYGDLRGGAPGRGTPPSYGGGGRYEEYRGCSPDAYSGGRDSYSSSYGRSDRYSRGRDRVGRPDRGLSLSMERGCPPQRDSYSRSGCRVPRGGGRLGGRMERGGGRSRY</sequence>